<comment type="function">
    <text>Monoterpene synthase that catalyzes the specific reduction of the 4,8-double bond of (+)-pulegone to produce both (-)-menthone and (+)-isomenthone in a 70:30 ratio. Unable to utilize either (-)-isopiperitenone or (+)-cis-isopulegone, or to catalyze the reverse reaction with (-)-menthone or (+)-isomenthone. Has an absolute requirement for NADPH.</text>
</comment>
<comment type="catalytic activity">
    <reaction evidence="2">
        <text>(2R,5R)-isomenthone + NADP(+) = (R)-pulegone + NADPH + H(+)</text>
        <dbReference type="Rhea" id="RHEA:25645"/>
        <dbReference type="ChEBI" id="CHEBI:15378"/>
        <dbReference type="ChEBI" id="CHEBI:35596"/>
        <dbReference type="ChEBI" id="CHEBI:36492"/>
        <dbReference type="ChEBI" id="CHEBI:57783"/>
        <dbReference type="ChEBI" id="CHEBI:58349"/>
        <dbReference type="EC" id="1.3.1.81"/>
    </reaction>
</comment>
<comment type="catalytic activity">
    <reaction evidence="2">
        <text>(1R,4S)-menthone + NADP(+) = (R)-pulegone + NADPH + H(+)</text>
        <dbReference type="Rhea" id="RHEA:25641"/>
        <dbReference type="ChEBI" id="CHEBI:15378"/>
        <dbReference type="ChEBI" id="CHEBI:15410"/>
        <dbReference type="ChEBI" id="CHEBI:35596"/>
        <dbReference type="ChEBI" id="CHEBI:57783"/>
        <dbReference type="ChEBI" id="CHEBI:58349"/>
        <dbReference type="EC" id="1.3.1.81"/>
    </reaction>
</comment>
<comment type="activity regulation">
    <text evidence="3">Not inhibited by (+)-menthofuran.</text>
</comment>
<comment type="biophysicochemical properties">
    <kinetics>
        <KM evidence="2">2.3 uM for (+)-pulegone</KM>
        <KM evidence="2">6.9 uM for NADPH</KM>
    </kinetics>
    <phDependence>
        <text evidence="2">Optimum pH is 5.0.</text>
    </phDependence>
</comment>
<comment type="pathway">
    <text>Secondary metabolite biosynthesis; terpenoid biosynthesis.</text>
</comment>
<comment type="subcellular location">
    <subcellularLocation>
        <location evidence="4">Cytoplasm</location>
    </subcellularLocation>
</comment>
<comment type="induction">
    <text evidence="3">Down-regulated by (+)-menthofuran.</text>
</comment>
<comment type="similarity">
    <text evidence="4">Belongs to the NADP-dependent oxidoreductase L4BD family.</text>
</comment>
<evidence type="ECO:0000250" key="1"/>
<evidence type="ECO:0000269" key="2">
    <source>
    </source>
</evidence>
<evidence type="ECO:0000269" key="3">
    <source>
    </source>
</evidence>
<evidence type="ECO:0000305" key="4"/>
<evidence type="ECO:0007829" key="5">
    <source>
        <dbReference type="PDB" id="7EQL"/>
    </source>
</evidence>
<accession>Q6WAU0</accession>
<accession>B0F4G8</accession>
<protein>
    <recommendedName>
        <fullName>(+)-pulegone reductase</fullName>
        <ecNumber>1.3.1.81</ecNumber>
    </recommendedName>
</protein>
<feature type="chain" id="PRO_0000398337" description="(+)-pulegone reductase">
    <location>
        <begin position="1"/>
        <end position="342"/>
    </location>
</feature>
<feature type="binding site" evidence="1">
    <location>
        <begin position="163"/>
        <end position="166"/>
    </location>
    <ligand>
        <name>NADP(+)</name>
        <dbReference type="ChEBI" id="CHEBI:58349"/>
    </ligand>
</feature>
<feature type="binding site" evidence="1">
    <location>
        <position position="189"/>
    </location>
    <ligand>
        <name>NADP(+)</name>
        <dbReference type="ChEBI" id="CHEBI:58349"/>
    </ligand>
</feature>
<feature type="binding site" evidence="1">
    <location>
        <position position="205"/>
    </location>
    <ligand>
        <name>NADP(+)</name>
        <dbReference type="ChEBI" id="CHEBI:58349"/>
    </ligand>
</feature>
<feature type="binding site" evidence="1">
    <location>
        <position position="229"/>
    </location>
    <ligand>
        <name>NADP(+)</name>
        <dbReference type="ChEBI" id="CHEBI:58349"/>
    </ligand>
</feature>
<feature type="binding site" evidence="1">
    <location>
        <begin position="251"/>
        <end position="257"/>
    </location>
    <ligand>
        <name>NADP(+)</name>
        <dbReference type="ChEBI" id="CHEBI:58349"/>
    </ligand>
</feature>
<feature type="binding site" evidence="1">
    <location>
        <begin position="281"/>
        <end position="283"/>
    </location>
    <ligand>
        <name>NADP(+)</name>
        <dbReference type="ChEBI" id="CHEBI:58349"/>
    </ligand>
</feature>
<feature type="binding site" evidence="1">
    <location>
        <position position="331"/>
    </location>
    <ligand>
        <name>NADP(+)</name>
        <dbReference type="ChEBI" id="CHEBI:58349"/>
    </ligand>
</feature>
<feature type="sequence conflict" description="In Ref. 2; ABW86885." evidence="4" ref="2">
    <original>D</original>
    <variation>N</variation>
    <location>
        <position position="35"/>
    </location>
</feature>
<feature type="sequence conflict" description="In Ref. 2; ABW86885." evidence="4" ref="2">
    <original>R</original>
    <variation>C</variation>
    <location>
        <position position="300"/>
    </location>
</feature>
<feature type="sequence conflict" description="In Ref. 2; ABW86885." evidence="4" ref="2">
    <original>V</original>
    <variation>I</variation>
    <location>
        <position position="332"/>
    </location>
</feature>
<feature type="strand" evidence="5">
    <location>
        <begin position="2"/>
        <end position="9"/>
    </location>
</feature>
<feature type="strand" evidence="5">
    <location>
        <begin position="14"/>
        <end position="16"/>
    </location>
</feature>
<feature type="helix" evidence="5">
    <location>
        <begin position="19"/>
        <end position="21"/>
    </location>
</feature>
<feature type="strand" evidence="5">
    <location>
        <begin position="22"/>
        <end position="29"/>
    </location>
</feature>
<feature type="strand" evidence="5">
    <location>
        <begin position="41"/>
        <end position="50"/>
    </location>
</feature>
<feature type="helix" evidence="5">
    <location>
        <begin position="53"/>
        <end position="56"/>
    </location>
</feature>
<feature type="strand" evidence="5">
    <location>
        <begin position="76"/>
        <end position="88"/>
    </location>
</feature>
<feature type="strand" evidence="5">
    <location>
        <begin position="96"/>
        <end position="112"/>
    </location>
</feature>
<feature type="helix" evidence="5">
    <location>
        <begin position="126"/>
        <end position="129"/>
    </location>
</feature>
<feature type="turn" evidence="5">
    <location>
        <begin position="130"/>
        <end position="132"/>
    </location>
</feature>
<feature type="helix" evidence="5">
    <location>
        <begin position="135"/>
        <end position="145"/>
    </location>
</feature>
<feature type="strand" evidence="5">
    <location>
        <begin position="155"/>
        <end position="159"/>
    </location>
</feature>
<feature type="turn" evidence="5">
    <location>
        <begin position="160"/>
        <end position="162"/>
    </location>
</feature>
<feature type="helix" evidence="5">
    <location>
        <begin position="166"/>
        <end position="176"/>
    </location>
</feature>
<feature type="strand" evidence="5">
    <location>
        <begin position="179"/>
        <end position="186"/>
    </location>
</feature>
<feature type="helix" evidence="5">
    <location>
        <begin position="187"/>
        <end position="197"/>
    </location>
</feature>
<feature type="strand" evidence="5">
    <location>
        <begin position="200"/>
        <end position="204"/>
    </location>
</feature>
<feature type="turn" evidence="5">
    <location>
        <begin position="205"/>
        <end position="207"/>
    </location>
</feature>
<feature type="helix" evidence="5">
    <location>
        <begin position="211"/>
        <end position="218"/>
    </location>
</feature>
<feature type="strand" evidence="5">
    <location>
        <begin position="223"/>
        <end position="230"/>
    </location>
</feature>
<feature type="helix" evidence="5">
    <location>
        <begin position="232"/>
        <end position="241"/>
    </location>
</feature>
<feature type="strand" evidence="5">
    <location>
        <begin position="242"/>
        <end position="250"/>
    </location>
</feature>
<feature type="helix" evidence="5">
    <location>
        <begin position="254"/>
        <end position="256"/>
    </location>
</feature>
<feature type="helix" evidence="5">
    <location>
        <begin position="267"/>
        <end position="271"/>
    </location>
</feature>
<feature type="turn" evidence="5">
    <location>
        <begin position="272"/>
        <end position="275"/>
    </location>
</feature>
<feature type="strand" evidence="5">
    <location>
        <begin position="277"/>
        <end position="280"/>
    </location>
</feature>
<feature type="helix" evidence="5">
    <location>
        <begin position="283"/>
        <end position="289"/>
    </location>
</feature>
<feature type="helix" evidence="5">
    <location>
        <begin position="290"/>
        <end position="297"/>
    </location>
</feature>
<feature type="turn" evidence="5">
    <location>
        <begin position="298"/>
        <end position="303"/>
    </location>
</feature>
<feature type="strand" evidence="5">
    <location>
        <begin position="304"/>
        <end position="306"/>
    </location>
</feature>
<feature type="strand" evidence="5">
    <location>
        <begin position="310"/>
        <end position="315"/>
    </location>
</feature>
<feature type="turn" evidence="5">
    <location>
        <begin position="316"/>
        <end position="318"/>
    </location>
</feature>
<feature type="helix" evidence="5">
    <location>
        <begin position="319"/>
        <end position="327"/>
    </location>
</feature>
<feature type="strand" evidence="5">
    <location>
        <begin position="333"/>
        <end position="339"/>
    </location>
</feature>
<organism>
    <name type="scientific">Mentha piperita</name>
    <name type="common">Peppermint</name>
    <name type="synonym">Mentha aquatica x Mentha spicata</name>
    <dbReference type="NCBI Taxonomy" id="34256"/>
    <lineage>
        <taxon>Eukaryota</taxon>
        <taxon>Viridiplantae</taxon>
        <taxon>Streptophyta</taxon>
        <taxon>Embryophyta</taxon>
        <taxon>Tracheophyta</taxon>
        <taxon>Spermatophyta</taxon>
        <taxon>Magnoliopsida</taxon>
        <taxon>eudicotyledons</taxon>
        <taxon>Gunneridae</taxon>
        <taxon>Pentapetalae</taxon>
        <taxon>asterids</taxon>
        <taxon>lamiids</taxon>
        <taxon>Lamiales</taxon>
        <taxon>Lamiaceae</taxon>
        <taxon>Nepetoideae</taxon>
        <taxon>Mentheae</taxon>
        <taxon>Menthinae</taxon>
        <taxon>Mentha</taxon>
    </lineage>
</organism>
<reference key="1">
    <citation type="journal article" date="2003" name="Arch. Biochem. Biophys.">
        <title>Monoterpene double-bond reductases of the (-)-menthol biosynthetic pathway: isolation and characterization of cDNAs encoding (-)-isopiperitenone reductase and (+)-pulegone reductase of peppermint.</title>
        <authorList>
            <person name="Ringer K.L."/>
            <person name="McConkey M.E."/>
            <person name="Davis E.M."/>
            <person name="Rushing G.W."/>
            <person name="Croteau R."/>
        </authorList>
    </citation>
    <scope>NUCLEOTIDE SEQUENCE [MRNA]</scope>
    <scope>CATALYTIC ACTIVITY</scope>
    <scope>BIOPHYSICOCHEMICAL PROPERTIES</scope>
    <source>
        <strain>cv. Black Mitcham</strain>
        <tissue>Peltate glandular trichome</tissue>
    </source>
</reference>
<reference key="2">
    <citation type="submission" date="2007-08" db="EMBL/GenBank/DDBJ databases">
        <title>Isolation of full-length genes of menthol biosynthesis pathway from Mentha x piperita cv. Madhuras.</title>
        <authorList>
            <person name="Gupta M.K."/>
            <person name="Gupta S."/>
            <person name="Shasany A.K."/>
            <person name="Khanuja S.P.S."/>
        </authorList>
    </citation>
    <scope>NUCLEOTIDE SEQUENCE [MRNA]</scope>
</reference>
<reference key="3">
    <citation type="journal article" date="2003" name="Proc. Natl. Acad. Sci. U.S.A.">
        <title>Menthofuran regulates essential oil biosynthesis in peppermint by controlling a downstream monoterpene reductase.</title>
        <authorList>
            <person name="Mahmoud S.S."/>
            <person name="Croteau R.B."/>
        </authorList>
    </citation>
    <scope>INDUCTION BY MENTHOFURAN</scope>
    <scope>ACTIVITY REGULATION</scope>
</reference>
<name>PULR_MENPI</name>
<proteinExistence type="evidence at protein level"/>
<sequence length="342" mass="37915">MVMNKQIVLNNYINGSLKQSDLALRTSTICMEIPDGCNGAILVKNLYLSVNPYLILRMGKLDIPQFDSILPGSTIVSYGVSKVLDSTHPSYEKGELIWGSQAGWEEYTLIQNPYNLFKIQDKDVPLSYYVGILGMPGMTAYAGFFEICSPKKGETVFVTAAAGSVGQLVGQFAKMFGCYVVGSAGSKEKVDLLKNKFGFDDAFNYKEESDYDTALKRHFPEGIDIYFDNVGGKMLEAVINNMRVHGRIAVCGMVSQYSLKQPEGVHNLLKLIPKQIRMQGFVVVDYYHLYPKFLEMVLPRIKEGKVTYVEDISEGLESAPSALLGVYVGRNVGNQVVAVSRE</sequence>
<keyword id="KW-0002">3D-structure</keyword>
<keyword id="KW-0963">Cytoplasm</keyword>
<keyword id="KW-0521">NADP</keyword>
<keyword id="KW-0560">Oxidoreductase</keyword>
<dbReference type="EC" id="1.3.1.81"/>
<dbReference type="EMBL" id="AY300163">
    <property type="protein sequence ID" value="AAQ75423.1"/>
    <property type="molecule type" value="mRNA"/>
</dbReference>
<dbReference type="EMBL" id="EU108701">
    <property type="protein sequence ID" value="ABW86885.1"/>
    <property type="molecule type" value="mRNA"/>
</dbReference>
<dbReference type="PDB" id="7EQL">
    <property type="method" value="X-ray"/>
    <property type="resolution" value="2.72 A"/>
    <property type="chains" value="A=1-342"/>
</dbReference>
<dbReference type="PDBsum" id="7EQL"/>
<dbReference type="SMR" id="Q6WAU0"/>
<dbReference type="KEGG" id="ag:AAQ75423"/>
<dbReference type="BioCyc" id="MetaCyc:MONOMER-6685"/>
<dbReference type="BRENDA" id="1.3.1.81">
    <property type="organism ID" value="3222"/>
</dbReference>
<dbReference type="UniPathway" id="UPA00213"/>
<dbReference type="GO" id="GO:0005737">
    <property type="term" value="C:cytoplasm"/>
    <property type="evidence" value="ECO:0007669"/>
    <property type="project" value="UniProtKB-SubCell"/>
</dbReference>
<dbReference type="GO" id="GO:0052579">
    <property type="term" value="F:(+)-pulegone reductase (NADP+) activity"/>
    <property type="evidence" value="ECO:0000314"/>
    <property type="project" value="UniProtKB"/>
</dbReference>
<dbReference type="GO" id="GO:0032440">
    <property type="term" value="F:2-alkenal reductase [NAD(P)+] activity"/>
    <property type="evidence" value="ECO:0007669"/>
    <property type="project" value="TreeGrafter"/>
</dbReference>
<dbReference type="GO" id="GO:0070402">
    <property type="term" value="F:NADPH binding"/>
    <property type="evidence" value="ECO:0000314"/>
    <property type="project" value="UniProtKB"/>
</dbReference>
<dbReference type="GO" id="GO:0006979">
    <property type="term" value="P:response to oxidative stress"/>
    <property type="evidence" value="ECO:0007669"/>
    <property type="project" value="TreeGrafter"/>
</dbReference>
<dbReference type="GO" id="GO:0042214">
    <property type="term" value="P:terpene metabolic process"/>
    <property type="evidence" value="ECO:0000314"/>
    <property type="project" value="UniProtKB"/>
</dbReference>
<dbReference type="GO" id="GO:0016114">
    <property type="term" value="P:terpenoid biosynthetic process"/>
    <property type="evidence" value="ECO:0007669"/>
    <property type="project" value="UniProtKB-UniPathway"/>
</dbReference>
<dbReference type="CDD" id="cd08295">
    <property type="entry name" value="double_bond_reductase_like"/>
    <property type="match status" value="1"/>
</dbReference>
<dbReference type="FunFam" id="3.40.50.720:FF:000121">
    <property type="entry name" value="Prostaglandin reductase 2"/>
    <property type="match status" value="1"/>
</dbReference>
<dbReference type="Gene3D" id="3.90.180.10">
    <property type="entry name" value="Medium-chain alcohol dehydrogenases, catalytic domain"/>
    <property type="match status" value="1"/>
</dbReference>
<dbReference type="Gene3D" id="3.40.50.720">
    <property type="entry name" value="NAD(P)-binding Rossmann-like Domain"/>
    <property type="match status" value="1"/>
</dbReference>
<dbReference type="InterPro" id="IPR013149">
    <property type="entry name" value="ADH-like_C"/>
</dbReference>
<dbReference type="InterPro" id="IPR041694">
    <property type="entry name" value="ADH_N_2"/>
</dbReference>
<dbReference type="InterPro" id="IPR011032">
    <property type="entry name" value="GroES-like_sf"/>
</dbReference>
<dbReference type="InterPro" id="IPR045010">
    <property type="entry name" value="MDR_fam"/>
</dbReference>
<dbReference type="InterPro" id="IPR036291">
    <property type="entry name" value="NAD(P)-bd_dom_sf"/>
</dbReference>
<dbReference type="InterPro" id="IPR020843">
    <property type="entry name" value="PKS_ER"/>
</dbReference>
<dbReference type="PANTHER" id="PTHR43205">
    <property type="entry name" value="PROSTAGLANDIN REDUCTASE"/>
    <property type="match status" value="1"/>
</dbReference>
<dbReference type="PANTHER" id="PTHR43205:SF7">
    <property type="entry name" value="PROSTAGLANDIN REDUCTASE 1"/>
    <property type="match status" value="1"/>
</dbReference>
<dbReference type="Pfam" id="PF16884">
    <property type="entry name" value="ADH_N_2"/>
    <property type="match status" value="1"/>
</dbReference>
<dbReference type="Pfam" id="PF00107">
    <property type="entry name" value="ADH_zinc_N"/>
    <property type="match status" value="1"/>
</dbReference>
<dbReference type="SMART" id="SM00829">
    <property type="entry name" value="PKS_ER"/>
    <property type="match status" value="1"/>
</dbReference>
<dbReference type="SUPFAM" id="SSF50129">
    <property type="entry name" value="GroES-like"/>
    <property type="match status" value="1"/>
</dbReference>
<dbReference type="SUPFAM" id="SSF51735">
    <property type="entry name" value="NAD(P)-binding Rossmann-fold domains"/>
    <property type="match status" value="1"/>
</dbReference>